<gene>
    <name type="primary">RSM25</name>
    <name type="ordered locus">KLLA0E08239g</name>
</gene>
<dbReference type="EMBL" id="CR382125">
    <property type="protein sequence ID" value="CAG99410.1"/>
    <property type="molecule type" value="Genomic_DNA"/>
</dbReference>
<dbReference type="RefSeq" id="XP_454323.1">
    <property type="nucleotide sequence ID" value="XM_454323.1"/>
</dbReference>
<dbReference type="SMR" id="Q6CP16"/>
<dbReference type="FunCoup" id="Q6CP16">
    <property type="interactions" value="171"/>
</dbReference>
<dbReference type="STRING" id="284590.Q6CP16"/>
<dbReference type="PaxDb" id="284590-Q6CP16"/>
<dbReference type="KEGG" id="kla:KLLA0_E08273g"/>
<dbReference type="eggNOG" id="ENOG502RZQQ">
    <property type="taxonomic scope" value="Eukaryota"/>
</dbReference>
<dbReference type="HOGENOM" id="CLU_081350_0_0_1"/>
<dbReference type="InParanoid" id="Q6CP16"/>
<dbReference type="OMA" id="ENWKIWA"/>
<dbReference type="Proteomes" id="UP000000598">
    <property type="component" value="Chromosome E"/>
</dbReference>
<dbReference type="GO" id="GO:0005763">
    <property type="term" value="C:mitochondrial small ribosomal subunit"/>
    <property type="evidence" value="ECO:0007669"/>
    <property type="project" value="InterPro"/>
</dbReference>
<dbReference type="GO" id="GO:0003735">
    <property type="term" value="F:structural constituent of ribosome"/>
    <property type="evidence" value="ECO:0007669"/>
    <property type="project" value="InterPro"/>
</dbReference>
<dbReference type="InterPro" id="IPR016939">
    <property type="entry name" value="Ribosomal_mS23_fun"/>
</dbReference>
<dbReference type="PANTHER" id="PTHR37799">
    <property type="entry name" value="37S RIBOSOMAL PROTEIN S25, MITOCHONDRIAL"/>
    <property type="match status" value="1"/>
</dbReference>
<dbReference type="PANTHER" id="PTHR37799:SF1">
    <property type="entry name" value="SMALL RIBOSOMAL SUBUNIT PROTEIN MS23"/>
    <property type="match status" value="1"/>
</dbReference>
<dbReference type="Pfam" id="PF13741">
    <property type="entry name" value="MRP-S25"/>
    <property type="match status" value="1"/>
</dbReference>
<dbReference type="PIRSF" id="PIRSF029764">
    <property type="entry name" value="RSM25"/>
    <property type="match status" value="1"/>
</dbReference>
<organism>
    <name type="scientific">Kluyveromyces lactis (strain ATCC 8585 / CBS 2359 / DSM 70799 / NBRC 1267 / NRRL Y-1140 / WM37)</name>
    <name type="common">Yeast</name>
    <name type="synonym">Candida sphaerica</name>
    <dbReference type="NCBI Taxonomy" id="284590"/>
    <lineage>
        <taxon>Eukaryota</taxon>
        <taxon>Fungi</taxon>
        <taxon>Dikarya</taxon>
        <taxon>Ascomycota</taxon>
        <taxon>Saccharomycotina</taxon>
        <taxon>Saccharomycetes</taxon>
        <taxon>Saccharomycetales</taxon>
        <taxon>Saccharomycetaceae</taxon>
        <taxon>Kluyveromyces</taxon>
    </lineage>
</organism>
<feature type="chain" id="PRO_0000343552" description="Small ribosomal subunit protein mS23">
    <location>
        <begin position="1"/>
        <end position="261"/>
    </location>
</feature>
<feature type="region of interest" description="Disordered" evidence="2">
    <location>
        <begin position="233"/>
        <end position="261"/>
    </location>
</feature>
<comment type="subunit">
    <text evidence="1">Component of the mitochondrial small ribosomal subunit.</text>
</comment>
<comment type="subcellular location">
    <subcellularLocation>
        <location evidence="1">Mitochondrion</location>
    </subcellularLocation>
</comment>
<comment type="similarity">
    <text evidence="3">Belongs to the mitochondrion-specific ribosomal protein mS23 family.</text>
</comment>
<sequence length="261" mass="30223">MKVQQEAVNVLERTSAYLKSGILKKTPAWYNVIAKVPPTKKFARTPQLTHPMNGKSRTALPDYSNWKANSSGLYKTRPNSLEKKDGASKLYQSPKLVYIEDKLRKLFFQQHPWELSRPKILVENTLETQEYDWSHIQQLGKPLDGESVVQRTLFLLKSGEKKELIDAYDQARFEFYRLRIQQEIQDQVAQEEAEMFGSVFHTTSIEYGIAKEQKVIDTWKRKALQQAELMAARASSPSASWTNETEEEQKPIDQDVEEIQL</sequence>
<accession>Q6CP16</accession>
<protein>
    <recommendedName>
        <fullName evidence="3">Small ribosomal subunit protein mS23</fullName>
    </recommendedName>
    <alternativeName>
        <fullName>37S ribosomal protein S25, mitochondrial</fullName>
    </alternativeName>
</protein>
<keyword id="KW-0496">Mitochondrion</keyword>
<keyword id="KW-1185">Reference proteome</keyword>
<keyword id="KW-0687">Ribonucleoprotein</keyword>
<keyword id="KW-0689">Ribosomal protein</keyword>
<name>RT25_KLULA</name>
<evidence type="ECO:0000250" key="1"/>
<evidence type="ECO:0000256" key="2">
    <source>
        <dbReference type="SAM" id="MobiDB-lite"/>
    </source>
</evidence>
<evidence type="ECO:0000305" key="3"/>
<proteinExistence type="inferred from homology"/>
<reference key="1">
    <citation type="journal article" date="2004" name="Nature">
        <title>Genome evolution in yeasts.</title>
        <authorList>
            <person name="Dujon B."/>
            <person name="Sherman D."/>
            <person name="Fischer G."/>
            <person name="Durrens P."/>
            <person name="Casaregola S."/>
            <person name="Lafontaine I."/>
            <person name="de Montigny J."/>
            <person name="Marck C."/>
            <person name="Neuveglise C."/>
            <person name="Talla E."/>
            <person name="Goffard N."/>
            <person name="Frangeul L."/>
            <person name="Aigle M."/>
            <person name="Anthouard V."/>
            <person name="Babour A."/>
            <person name="Barbe V."/>
            <person name="Barnay S."/>
            <person name="Blanchin S."/>
            <person name="Beckerich J.-M."/>
            <person name="Beyne E."/>
            <person name="Bleykasten C."/>
            <person name="Boisrame A."/>
            <person name="Boyer J."/>
            <person name="Cattolico L."/>
            <person name="Confanioleri F."/>
            <person name="de Daruvar A."/>
            <person name="Despons L."/>
            <person name="Fabre E."/>
            <person name="Fairhead C."/>
            <person name="Ferry-Dumazet H."/>
            <person name="Groppi A."/>
            <person name="Hantraye F."/>
            <person name="Hennequin C."/>
            <person name="Jauniaux N."/>
            <person name="Joyet P."/>
            <person name="Kachouri R."/>
            <person name="Kerrest A."/>
            <person name="Koszul R."/>
            <person name="Lemaire M."/>
            <person name="Lesur I."/>
            <person name="Ma L."/>
            <person name="Muller H."/>
            <person name="Nicaud J.-M."/>
            <person name="Nikolski M."/>
            <person name="Oztas S."/>
            <person name="Ozier-Kalogeropoulos O."/>
            <person name="Pellenz S."/>
            <person name="Potier S."/>
            <person name="Richard G.-F."/>
            <person name="Straub M.-L."/>
            <person name="Suleau A."/>
            <person name="Swennen D."/>
            <person name="Tekaia F."/>
            <person name="Wesolowski-Louvel M."/>
            <person name="Westhof E."/>
            <person name="Wirth B."/>
            <person name="Zeniou-Meyer M."/>
            <person name="Zivanovic Y."/>
            <person name="Bolotin-Fukuhara M."/>
            <person name="Thierry A."/>
            <person name="Bouchier C."/>
            <person name="Caudron B."/>
            <person name="Scarpelli C."/>
            <person name="Gaillardin C."/>
            <person name="Weissenbach J."/>
            <person name="Wincker P."/>
            <person name="Souciet J.-L."/>
        </authorList>
    </citation>
    <scope>NUCLEOTIDE SEQUENCE [LARGE SCALE GENOMIC DNA]</scope>
    <source>
        <strain>ATCC 8585 / CBS 2359 / DSM 70799 / NBRC 1267 / NRRL Y-1140 / WM37</strain>
    </source>
</reference>